<keyword id="KW-0408">Iron</keyword>
<keyword id="KW-0411">Iron-sulfur</keyword>
<keyword id="KW-0479">Metal-binding</keyword>
<keyword id="KW-1185">Reference proteome</keyword>
<evidence type="ECO:0000255" key="1">
    <source>
        <dbReference type="HAMAP-Rule" id="MF_01380"/>
    </source>
</evidence>
<feature type="chain" id="PRO_0000311500" description="Iron-sulfur cluster insertion protein ErpA">
    <location>
        <begin position="1"/>
        <end position="130"/>
    </location>
</feature>
<feature type="binding site" evidence="1">
    <location>
        <position position="46"/>
    </location>
    <ligand>
        <name>iron-sulfur cluster</name>
        <dbReference type="ChEBI" id="CHEBI:30408"/>
    </ligand>
</feature>
<feature type="binding site" evidence="1">
    <location>
        <position position="116"/>
    </location>
    <ligand>
        <name>iron-sulfur cluster</name>
        <dbReference type="ChEBI" id="CHEBI:30408"/>
    </ligand>
</feature>
<feature type="binding site" evidence="1">
    <location>
        <position position="118"/>
    </location>
    <ligand>
        <name>iron-sulfur cluster</name>
        <dbReference type="ChEBI" id="CHEBI:30408"/>
    </ligand>
</feature>
<proteinExistence type="inferred from homology"/>
<accession>Q5ZVQ2</accession>
<gene>
    <name evidence="1" type="primary">erpA</name>
    <name type="ordered locus">lpg1388</name>
</gene>
<sequence>MANLDVSQNTSDIHFSVSAADKVAELIKEEDNSNLNLRVSITGGGCSGFQYGFSFDEQINDDDTIVIQQCSDGKSSVKLLVDSMSYQYLHDAEIDYIKGIQGEQFVIRNPNAKTTCGCGSSFSIGDEDDL</sequence>
<protein>
    <recommendedName>
        <fullName evidence="1">Iron-sulfur cluster insertion protein ErpA</fullName>
    </recommendedName>
</protein>
<name>ERPA_LEGPH</name>
<reference key="1">
    <citation type="journal article" date="2004" name="Science">
        <title>The genomic sequence of the accidental pathogen Legionella pneumophila.</title>
        <authorList>
            <person name="Chien M."/>
            <person name="Morozova I."/>
            <person name="Shi S."/>
            <person name="Sheng H."/>
            <person name="Chen J."/>
            <person name="Gomez S.M."/>
            <person name="Asamani G."/>
            <person name="Hill K."/>
            <person name="Nuara J."/>
            <person name="Feder M."/>
            <person name="Rineer J."/>
            <person name="Greenberg J.J."/>
            <person name="Steshenko V."/>
            <person name="Park S.H."/>
            <person name="Zhao B."/>
            <person name="Teplitskaya E."/>
            <person name="Edwards J.R."/>
            <person name="Pampou S."/>
            <person name="Georghiou A."/>
            <person name="Chou I.-C."/>
            <person name="Iannuccilli W."/>
            <person name="Ulz M.E."/>
            <person name="Kim D.H."/>
            <person name="Geringer-Sameth A."/>
            <person name="Goldsberry C."/>
            <person name="Morozov P."/>
            <person name="Fischer S.G."/>
            <person name="Segal G."/>
            <person name="Qu X."/>
            <person name="Rzhetsky A."/>
            <person name="Zhang P."/>
            <person name="Cayanis E."/>
            <person name="De Jong P.J."/>
            <person name="Ju J."/>
            <person name="Kalachikov S."/>
            <person name="Shuman H.A."/>
            <person name="Russo J.J."/>
        </authorList>
    </citation>
    <scope>NUCLEOTIDE SEQUENCE [LARGE SCALE GENOMIC DNA]</scope>
    <source>
        <strain>Philadelphia 1 / ATCC 33152 / DSM 7513</strain>
    </source>
</reference>
<dbReference type="EMBL" id="AE017354">
    <property type="protein sequence ID" value="AAU27470.1"/>
    <property type="molecule type" value="Genomic_DNA"/>
</dbReference>
<dbReference type="RefSeq" id="WP_010947118.1">
    <property type="nucleotide sequence ID" value="NC_002942.5"/>
</dbReference>
<dbReference type="RefSeq" id="YP_095417.1">
    <property type="nucleotide sequence ID" value="NC_002942.5"/>
</dbReference>
<dbReference type="SMR" id="Q5ZVQ2"/>
<dbReference type="STRING" id="272624.lpg1388"/>
<dbReference type="PaxDb" id="272624-lpg1388"/>
<dbReference type="GeneID" id="57035378"/>
<dbReference type="KEGG" id="lpn:lpg1388"/>
<dbReference type="PATRIC" id="fig|272624.6.peg.1458"/>
<dbReference type="eggNOG" id="COG0316">
    <property type="taxonomic scope" value="Bacteria"/>
</dbReference>
<dbReference type="HOGENOM" id="CLU_069054_5_3_6"/>
<dbReference type="OrthoDB" id="9801228at2"/>
<dbReference type="Proteomes" id="UP000000609">
    <property type="component" value="Chromosome"/>
</dbReference>
<dbReference type="GO" id="GO:0051537">
    <property type="term" value="F:2 iron, 2 sulfur cluster binding"/>
    <property type="evidence" value="ECO:0007669"/>
    <property type="project" value="UniProtKB-ARBA"/>
</dbReference>
<dbReference type="GO" id="GO:0051539">
    <property type="term" value="F:4 iron, 4 sulfur cluster binding"/>
    <property type="evidence" value="ECO:0007669"/>
    <property type="project" value="TreeGrafter"/>
</dbReference>
<dbReference type="GO" id="GO:0005506">
    <property type="term" value="F:iron ion binding"/>
    <property type="evidence" value="ECO:0007669"/>
    <property type="project" value="UniProtKB-UniRule"/>
</dbReference>
<dbReference type="GO" id="GO:0016226">
    <property type="term" value="P:iron-sulfur cluster assembly"/>
    <property type="evidence" value="ECO:0007669"/>
    <property type="project" value="UniProtKB-UniRule"/>
</dbReference>
<dbReference type="FunFam" id="2.60.300.12:FF:000002">
    <property type="entry name" value="Iron-sulfur cluster insertion protein ErpA"/>
    <property type="match status" value="1"/>
</dbReference>
<dbReference type="Gene3D" id="2.60.300.12">
    <property type="entry name" value="HesB-like domain"/>
    <property type="match status" value="1"/>
</dbReference>
<dbReference type="HAMAP" id="MF_01380">
    <property type="entry name" value="Fe_S_insert_ErpA"/>
    <property type="match status" value="1"/>
</dbReference>
<dbReference type="InterPro" id="IPR000361">
    <property type="entry name" value="FeS_biogenesis"/>
</dbReference>
<dbReference type="InterPro" id="IPR016092">
    <property type="entry name" value="FeS_cluster_insertion"/>
</dbReference>
<dbReference type="InterPro" id="IPR017870">
    <property type="entry name" value="FeS_cluster_insertion_CS"/>
</dbReference>
<dbReference type="InterPro" id="IPR023063">
    <property type="entry name" value="FeS_cluster_insertion_RrpA"/>
</dbReference>
<dbReference type="InterPro" id="IPR035903">
    <property type="entry name" value="HesB-like_dom_sf"/>
</dbReference>
<dbReference type="NCBIfam" id="TIGR00049">
    <property type="entry name" value="iron-sulfur cluster assembly accessory protein"/>
    <property type="match status" value="1"/>
</dbReference>
<dbReference type="NCBIfam" id="NF010147">
    <property type="entry name" value="PRK13623.1"/>
    <property type="match status" value="1"/>
</dbReference>
<dbReference type="PANTHER" id="PTHR43011">
    <property type="entry name" value="IRON-SULFUR CLUSTER ASSEMBLY 2 HOMOLOG, MITOCHONDRIAL"/>
    <property type="match status" value="1"/>
</dbReference>
<dbReference type="PANTHER" id="PTHR43011:SF1">
    <property type="entry name" value="IRON-SULFUR CLUSTER ASSEMBLY 2 HOMOLOG, MITOCHONDRIAL"/>
    <property type="match status" value="1"/>
</dbReference>
<dbReference type="Pfam" id="PF01521">
    <property type="entry name" value="Fe-S_biosyn"/>
    <property type="match status" value="1"/>
</dbReference>
<dbReference type="SUPFAM" id="SSF89360">
    <property type="entry name" value="HesB-like domain"/>
    <property type="match status" value="1"/>
</dbReference>
<dbReference type="PROSITE" id="PS01152">
    <property type="entry name" value="HESB"/>
    <property type="match status" value="1"/>
</dbReference>
<organism>
    <name type="scientific">Legionella pneumophila subsp. pneumophila (strain Philadelphia 1 / ATCC 33152 / DSM 7513)</name>
    <dbReference type="NCBI Taxonomy" id="272624"/>
    <lineage>
        <taxon>Bacteria</taxon>
        <taxon>Pseudomonadati</taxon>
        <taxon>Pseudomonadota</taxon>
        <taxon>Gammaproteobacteria</taxon>
        <taxon>Legionellales</taxon>
        <taxon>Legionellaceae</taxon>
        <taxon>Legionella</taxon>
    </lineage>
</organism>
<comment type="function">
    <text evidence="1">Required for insertion of 4Fe-4S clusters for at least IspG.</text>
</comment>
<comment type="cofactor">
    <cofactor evidence="1">
        <name>iron-sulfur cluster</name>
        <dbReference type="ChEBI" id="CHEBI:30408"/>
    </cofactor>
    <text evidence="1">Binds 1 iron-sulfur cluster per subunit.</text>
</comment>
<comment type="subunit">
    <text evidence="1">Homodimer.</text>
</comment>
<comment type="similarity">
    <text evidence="1">Belongs to the HesB/IscA family.</text>
</comment>